<feature type="signal peptide" evidence="2">
    <location>
        <begin position="1"/>
        <end position="18"/>
    </location>
</feature>
<feature type="chain" id="PRO_0000441988" description="NADPH-dependent reductive aminase">
    <location>
        <begin position="19"/>
        <end position="295"/>
    </location>
</feature>
<feature type="binding site" evidence="1">
    <location>
        <begin position="6"/>
        <end position="20"/>
    </location>
    <ligand>
        <name>NADP(+)</name>
        <dbReference type="ChEBI" id="CHEBI:58349"/>
    </ligand>
</feature>
<feature type="mutagenesis site" description="Leads to a 30-fold decrease in reductive aminase activity." evidence="3">
    <original>D</original>
    <variation>A</variation>
    <variation>N</variation>
    <location>
        <position position="169"/>
    </location>
</feature>
<feature type="mutagenesis site" description="Leads to a 200-fold decrease in reductive aminase activity." evidence="3">
    <original>Y</original>
    <variation>A</variation>
    <location>
        <position position="177"/>
    </location>
</feature>
<feature type="mutagenesis site" description="Displays a dramatic selectivity switch to yield the antipodal (S)-amine products with a variety of amine nucleophiles." evidence="3">
    <original>W</original>
    <variation>A</variation>
    <variation>S</variation>
    <location>
        <position position="210"/>
    </location>
</feature>
<feature type="mutagenesis site" description="Displays significant improvements in (R)-selectivity for most substrates." evidence="3">
    <original>Q</original>
    <variation>A</variation>
    <variation>S</variation>
    <location>
        <position position="240"/>
    </location>
</feature>
<feature type="strand" evidence="6">
    <location>
        <begin position="4"/>
        <end position="8"/>
    </location>
</feature>
<feature type="helix" evidence="6">
    <location>
        <begin position="12"/>
        <end position="23"/>
    </location>
</feature>
<feature type="strand" evidence="6">
    <location>
        <begin position="27"/>
        <end position="31"/>
    </location>
</feature>
<feature type="helix" evidence="6">
    <location>
        <begin position="35"/>
        <end position="38"/>
    </location>
</feature>
<feature type="helix" evidence="6">
    <location>
        <begin position="39"/>
        <end position="43"/>
    </location>
</feature>
<feature type="helix" evidence="6">
    <location>
        <begin position="52"/>
        <end position="57"/>
    </location>
</feature>
<feature type="strand" evidence="6">
    <location>
        <begin position="60"/>
        <end position="64"/>
    </location>
</feature>
<feature type="helix" evidence="6">
    <location>
        <begin position="69"/>
        <end position="77"/>
    </location>
</feature>
<feature type="helix" evidence="6">
    <location>
        <begin position="78"/>
        <end position="82"/>
    </location>
</feature>
<feature type="strand" evidence="6">
    <location>
        <begin position="87"/>
        <end position="90"/>
    </location>
</feature>
<feature type="helix" evidence="6">
    <location>
        <begin position="96"/>
        <end position="107"/>
    </location>
</feature>
<feature type="turn" evidence="6">
    <location>
        <begin position="108"/>
        <end position="110"/>
    </location>
</feature>
<feature type="strand" evidence="6">
    <location>
        <begin position="112"/>
        <end position="120"/>
    </location>
</feature>
<feature type="helix" evidence="6">
    <location>
        <begin position="122"/>
        <end position="124"/>
    </location>
</feature>
<feature type="strand" evidence="6">
    <location>
        <begin position="131"/>
        <end position="137"/>
    </location>
</feature>
<feature type="helix" evidence="6">
    <location>
        <begin position="139"/>
        <end position="149"/>
    </location>
</feature>
<feature type="helix" evidence="6">
    <location>
        <begin position="150"/>
        <end position="152"/>
    </location>
</feature>
<feature type="strand" evidence="6">
    <location>
        <begin position="153"/>
        <end position="157"/>
    </location>
</feature>
<feature type="helix" evidence="6">
    <location>
        <begin position="164"/>
        <end position="191"/>
    </location>
</feature>
<feature type="helix" evidence="6">
    <location>
        <begin position="200"/>
        <end position="213"/>
    </location>
</feature>
<feature type="helix" evidence="6">
    <location>
        <begin position="215"/>
        <end position="227"/>
    </location>
</feature>
<feature type="helix" evidence="6">
    <location>
        <begin position="237"/>
        <end position="254"/>
    </location>
</feature>
<feature type="turn" evidence="6">
    <location>
        <begin position="259"/>
        <end position="261"/>
    </location>
</feature>
<feature type="helix" evidence="6">
    <location>
        <begin position="262"/>
        <end position="273"/>
    </location>
</feature>
<feature type="helix" evidence="6">
    <location>
        <begin position="281"/>
        <end position="287"/>
    </location>
</feature>
<protein>
    <recommendedName>
        <fullName evidence="4">NADPH-dependent reductive aminase</fullName>
        <shortName evidence="4">RedAm</shortName>
        <ecNumber evidence="3">1.1.1.-</ecNumber>
    </recommendedName>
</protein>
<evidence type="ECO:0000250" key="1">
    <source>
        <dbReference type="UniProtKB" id="Q49A26"/>
    </source>
</evidence>
<evidence type="ECO:0000255" key="2"/>
<evidence type="ECO:0000269" key="3">
    <source ref="2"/>
</evidence>
<evidence type="ECO:0000303" key="4">
    <source ref="2"/>
</evidence>
<evidence type="ECO:0000305" key="5"/>
<evidence type="ECO:0007829" key="6">
    <source>
        <dbReference type="PDB" id="5G6R"/>
    </source>
</evidence>
<name>REDAM_ASPOR</name>
<keyword id="KW-0002">3D-structure</keyword>
<keyword id="KW-0521">NADP</keyword>
<keyword id="KW-0560">Oxidoreductase</keyword>
<keyword id="KW-1185">Reference proteome</keyword>
<keyword id="KW-0732">Signal</keyword>
<comment type="function">
    <text evidence="3">NADPH-dependent reductive aminase that catalyzes the reductive coupling of a broad set of carbonyl compounds with a variety of primary and secondary amines (Ref.2). Possesses remarkably high activity for the reductive amination of ketones and amines, often with high stereoselectivity and in some cases with ketone:amine ratios as low as 1:1 (Ref.2). The cofactor NADPH, the carbonyl compound and the amine are added to the enzyme in that sequence, followed by the release of product, NADP(+) being released at last (Ref.2). RedAm is also able to act in the reverse, oxidative direction and exhibits activity in the dehydrogenation of amines to yield imines (Ref.2). The highest activity is found for 1-methyl-tetrahydroquinoline and acyclic amines are also found to be transformed (Ref.2).</text>
</comment>
<comment type="cofactor">
    <cofactor evidence="3">
        <name>NADPH</name>
        <dbReference type="ChEBI" id="CHEBI:57783"/>
    </cofactor>
</comment>
<comment type="biophysicochemical properties">
    <kinetics>
        <KM evidence="3">0.12 mM for NADPH (with cyclohexanone and methylamine as saturated substrates)</KM>
        <KM evidence="3">2.13 mM for cyclohexanone (with NADPH and methylamine as saturated substrates)</KM>
        <KM evidence="3">8.23 mM for methylamine (with cyclohexanone and NADPH as saturated substrates)</KM>
        <KM evidence="3">1.9 mM for cyclohexanone (with NADPH and propargylamine as saturated substrates)</KM>
        <KM evidence="3">2.31 mM for cyclohexanone (with NADPH and allylamine as saturated substrates)</KM>
        <KM evidence="3">2.06 mM for cyclohexanone (with NADPH and pyrrolidine as saturated substrates)</KM>
        <KM evidence="3">1.9 mM for cyclohexanone (with NADPH and benzylamine as saturated substrates)</KM>
        <KM evidence="3">2.15 mM for cyclohexanone (with NADPH and ammonia as saturated substrates)</KM>
        <KM evidence="3">0.04 mM for indanone (with NADPH and propargylamine as saturated substrates)</KM>
        <KM evidence="3">0.94 mM for 4-phenyl-2-butanone (with NADPH and propargylamine as saturated substrates)</KM>
        <KM evidence="3">0.09 mM for acetophenone (with NADPH and propargylamine as saturated substrates)</KM>
        <KM evidence="3">12.2 mM for 2-allyl cyclohexanone (with NADPH and propargylamine as saturated substrates)</KM>
        <KM evidence="3">1.92 mM for 1-tetralone (with NADPH and propargylamine as saturated substrates)</KM>
        <KM evidence="3">5.4 mM for propargylamine (with cyclohexanone and NADPH as saturated substrates)</KM>
        <KM evidence="3">15.33 mM for isopropylamine (with cyclohexanone and NADPH as saturated substrates)</KM>
        <KM evidence="3">25.12 mM for pyrrolidine (with cyclohexanone and NADPH as saturated substrates)</KM>
        <KM evidence="3">0.08 mM for NADP(+) (with N-methylcyclohexylamine as saturated substrate)</KM>
        <KM evidence="3">11.61 mM for N-methylcyclohexylamine (with NADP(+) as saturated substrate)</KM>
    </kinetics>
</comment>
<comment type="subunit">
    <text evidence="3">Homodimer.</text>
</comment>
<comment type="similarity">
    <text evidence="5">Belongs to the HIBADH-related family.</text>
</comment>
<organism>
    <name type="scientific">Aspergillus oryzae (strain ATCC 42149 / RIB 40)</name>
    <name type="common">Yellow koji mold</name>
    <dbReference type="NCBI Taxonomy" id="510516"/>
    <lineage>
        <taxon>Eukaryota</taxon>
        <taxon>Fungi</taxon>
        <taxon>Dikarya</taxon>
        <taxon>Ascomycota</taxon>
        <taxon>Pezizomycotina</taxon>
        <taxon>Eurotiomycetes</taxon>
        <taxon>Eurotiomycetidae</taxon>
        <taxon>Eurotiales</taxon>
        <taxon>Aspergillaceae</taxon>
        <taxon>Aspergillus</taxon>
        <taxon>Aspergillus subgen. Circumdati</taxon>
    </lineage>
</organism>
<sequence>MSKHIGIFGLGAMGTALAAKYLEHGYKTSVWNRTTAKAIPLVEQGAKLASTISEGVNANDLIIICLLNNQVVEDALRDALQTLPSKTIVNLTNGTPNQARKLADFVTSHGARYIHGGIMAVPTMIGSPHAVLLYSGESLELFQSIESHLSLLGMSKYLGTDAGSASLHDLALLSGMYGLFSGFLHAVALIKSGQDTSTTATGLLPLLTPWLSAMTGYLSSIAKQIDDGDYATQGSNLGMQLAGVENIIRAGEEQRVSSQMILPIKALIEQAVGEGHGGEDLSALIEYFKVGKNVD</sequence>
<gene>
    <name type="ORF">AO090010000708</name>
</gene>
<dbReference type="EC" id="1.1.1.-" evidence="3"/>
<dbReference type="EMBL" id="BA000056">
    <property type="protein sequence ID" value="BAE66526.1"/>
    <property type="molecule type" value="Genomic_DNA"/>
</dbReference>
<dbReference type="RefSeq" id="XP_001827659.1">
    <property type="nucleotide sequence ID" value="XM_001827607.1"/>
</dbReference>
<dbReference type="PDB" id="5G6R">
    <property type="method" value="X-ray"/>
    <property type="resolution" value="1.82 A"/>
    <property type="chains" value="A/B=1-295"/>
</dbReference>
<dbReference type="PDB" id="5G6S">
    <property type="method" value="X-ray"/>
    <property type="resolution" value="2.35 A"/>
    <property type="chains" value="A/B/C/D/E/F/G/H=1-295"/>
</dbReference>
<dbReference type="PDBsum" id="5G6R"/>
<dbReference type="PDBsum" id="5G6S"/>
<dbReference type="SMR" id="Q2TW47"/>
<dbReference type="STRING" id="510516.Q2TW47"/>
<dbReference type="EnsemblFungi" id="BAE66526">
    <property type="protein sequence ID" value="BAE66526"/>
    <property type="gene ID" value="AO090010000708"/>
</dbReference>
<dbReference type="GeneID" id="5999793"/>
<dbReference type="KEGG" id="aor:AO090010000708"/>
<dbReference type="VEuPathDB" id="FungiDB:AO090010000708"/>
<dbReference type="HOGENOM" id="CLU_035117_2_1_1"/>
<dbReference type="OMA" id="DIFWTAM"/>
<dbReference type="OrthoDB" id="119297at5052"/>
<dbReference type="Proteomes" id="UP000006564">
    <property type="component" value="Chromosome 8"/>
</dbReference>
<dbReference type="GO" id="GO:0000785">
    <property type="term" value="C:chromatin"/>
    <property type="evidence" value="ECO:0007669"/>
    <property type="project" value="TreeGrafter"/>
</dbReference>
<dbReference type="GO" id="GO:0003677">
    <property type="term" value="F:DNA binding"/>
    <property type="evidence" value="ECO:0007669"/>
    <property type="project" value="TreeGrafter"/>
</dbReference>
<dbReference type="GO" id="GO:0050661">
    <property type="term" value="F:NADP binding"/>
    <property type="evidence" value="ECO:0007669"/>
    <property type="project" value="InterPro"/>
</dbReference>
<dbReference type="GO" id="GO:0031491">
    <property type="term" value="F:nucleosome binding"/>
    <property type="evidence" value="ECO:0007669"/>
    <property type="project" value="TreeGrafter"/>
</dbReference>
<dbReference type="GO" id="GO:0016491">
    <property type="term" value="F:oxidoreductase activity"/>
    <property type="evidence" value="ECO:0007669"/>
    <property type="project" value="UniProtKB-KW"/>
</dbReference>
<dbReference type="GO" id="GO:0140673">
    <property type="term" value="P:transcription elongation-coupled chromatin remodeling"/>
    <property type="evidence" value="ECO:0007669"/>
    <property type="project" value="TreeGrafter"/>
</dbReference>
<dbReference type="Gene3D" id="1.10.1040.10">
    <property type="entry name" value="N-(1-d-carboxylethyl)-l-norvaline Dehydrogenase, domain 2"/>
    <property type="match status" value="1"/>
</dbReference>
<dbReference type="Gene3D" id="3.40.50.720">
    <property type="entry name" value="NAD(P)-binding Rossmann-like Domain"/>
    <property type="match status" value="1"/>
</dbReference>
<dbReference type="InterPro" id="IPR013328">
    <property type="entry name" value="6PGD_dom2"/>
</dbReference>
<dbReference type="InterPro" id="IPR006115">
    <property type="entry name" value="6PGDH_NADP-bd"/>
</dbReference>
<dbReference type="InterPro" id="IPR015815">
    <property type="entry name" value="HIBADH-related"/>
</dbReference>
<dbReference type="InterPro" id="IPR051265">
    <property type="entry name" value="HIBADH-related_NP60_sf"/>
</dbReference>
<dbReference type="InterPro" id="IPR036291">
    <property type="entry name" value="NAD(P)-bd_dom_sf"/>
</dbReference>
<dbReference type="InterPro" id="IPR048666">
    <property type="entry name" value="RedAm-like_C"/>
</dbReference>
<dbReference type="PANTHER" id="PTHR43580:SF2">
    <property type="entry name" value="CYTOKINE-LIKE NUCLEAR FACTOR N-PAC"/>
    <property type="match status" value="1"/>
</dbReference>
<dbReference type="PANTHER" id="PTHR43580">
    <property type="entry name" value="OXIDOREDUCTASE GLYR1-RELATED"/>
    <property type="match status" value="1"/>
</dbReference>
<dbReference type="Pfam" id="PF03446">
    <property type="entry name" value="NAD_binding_2"/>
    <property type="match status" value="1"/>
</dbReference>
<dbReference type="Pfam" id="PF21761">
    <property type="entry name" value="RedAm-like_C"/>
    <property type="match status" value="1"/>
</dbReference>
<dbReference type="PIRSF" id="PIRSF000103">
    <property type="entry name" value="HIBADH"/>
    <property type="match status" value="1"/>
</dbReference>
<dbReference type="SUPFAM" id="SSF51735">
    <property type="entry name" value="NAD(P)-binding Rossmann-fold domains"/>
    <property type="match status" value="1"/>
</dbReference>
<proteinExistence type="evidence at protein level"/>
<accession>Q2TW47</accession>
<reference key="1">
    <citation type="journal article" date="2005" name="Nature">
        <title>Genome sequencing and analysis of Aspergillus oryzae.</title>
        <authorList>
            <person name="Machida M."/>
            <person name="Asai K."/>
            <person name="Sano M."/>
            <person name="Tanaka T."/>
            <person name="Kumagai T."/>
            <person name="Terai G."/>
            <person name="Kusumoto K."/>
            <person name="Arima T."/>
            <person name="Akita O."/>
            <person name="Kashiwagi Y."/>
            <person name="Abe K."/>
            <person name="Gomi K."/>
            <person name="Horiuchi H."/>
            <person name="Kitamoto K."/>
            <person name="Kobayashi T."/>
            <person name="Takeuchi M."/>
            <person name="Denning D.W."/>
            <person name="Galagan J.E."/>
            <person name="Nierman W.C."/>
            <person name="Yu J."/>
            <person name="Archer D.B."/>
            <person name="Bennett J.W."/>
            <person name="Bhatnagar D."/>
            <person name="Cleveland T.E."/>
            <person name="Fedorova N.D."/>
            <person name="Gotoh O."/>
            <person name="Horikawa H."/>
            <person name="Hosoyama A."/>
            <person name="Ichinomiya M."/>
            <person name="Igarashi R."/>
            <person name="Iwashita K."/>
            <person name="Juvvadi P.R."/>
            <person name="Kato M."/>
            <person name="Kato Y."/>
            <person name="Kin T."/>
            <person name="Kokubun A."/>
            <person name="Maeda H."/>
            <person name="Maeyama N."/>
            <person name="Maruyama J."/>
            <person name="Nagasaki H."/>
            <person name="Nakajima T."/>
            <person name="Oda K."/>
            <person name="Okada K."/>
            <person name="Paulsen I."/>
            <person name="Sakamoto K."/>
            <person name="Sawano T."/>
            <person name="Takahashi M."/>
            <person name="Takase K."/>
            <person name="Terabayashi Y."/>
            <person name="Wortman J.R."/>
            <person name="Yamada O."/>
            <person name="Yamagata Y."/>
            <person name="Anazawa H."/>
            <person name="Hata Y."/>
            <person name="Koide Y."/>
            <person name="Komori T."/>
            <person name="Koyama Y."/>
            <person name="Minetoki T."/>
            <person name="Suharnan S."/>
            <person name="Tanaka A."/>
            <person name="Isono K."/>
            <person name="Kuhara S."/>
            <person name="Ogasawara N."/>
            <person name="Kikuchi H."/>
        </authorList>
    </citation>
    <scope>NUCLEOTIDE SEQUENCE [LARGE SCALE GENOMIC DNA]</scope>
    <source>
        <strain>ATCC 42149 / RIB 40</strain>
    </source>
</reference>
<reference key="2">
    <citation type="journal article" date="2017" name="Nat. Chem.">
        <title>A reductive aminase from Aspergillus oryzae.</title>
        <authorList>
            <person name="Aleku G.A."/>
            <person name="France S.P."/>
            <person name="Man H."/>
            <person name="Mangas-Sanchez J."/>
            <person name="Montgomery S.L."/>
            <person name="Sharma M."/>
            <person name="Leipold F."/>
            <person name="Hussain S."/>
            <person name="Grogan G."/>
            <person name="Turner N.J."/>
        </authorList>
    </citation>
    <scope>X-RAY CRYSTALLOGRAPHY (1.82 ANGSTROMS) IN COMPLEX WITH SUBSTRATES</scope>
    <scope>COFACTOR</scope>
    <scope>SUBUNIT</scope>
    <scope>FUNCTION</scope>
    <scope>CATALYTIC ACTIVITY</scope>
    <scope>BIOPHYSICOCHEMICAL PROPERTIES</scope>
    <scope>ACTIVITY REGULATION</scope>
    <scope>MUTAGENESIS OF ASP-169; TYR-177; TRP-210 AND GLN-240</scope>
</reference>